<feature type="chain" id="PRO_0000195822" description="Xylose isomerase 2">
    <location>
        <begin position="1"/>
        <end position="446"/>
    </location>
</feature>
<feature type="active site" evidence="1">
    <location>
        <position position="109"/>
    </location>
</feature>
<feature type="active site" evidence="1">
    <location>
        <position position="112"/>
    </location>
</feature>
<feature type="binding site" evidence="1">
    <location>
        <position position="240"/>
    </location>
    <ligand>
        <name>Mg(2+)</name>
        <dbReference type="ChEBI" id="CHEBI:18420"/>
        <label>1</label>
    </ligand>
</feature>
<feature type="binding site" evidence="1">
    <location>
        <position position="276"/>
    </location>
    <ligand>
        <name>Mg(2+)</name>
        <dbReference type="ChEBI" id="CHEBI:18420"/>
        <label>1</label>
    </ligand>
</feature>
<feature type="binding site" evidence="1">
    <location>
        <position position="276"/>
    </location>
    <ligand>
        <name>Mg(2+)</name>
        <dbReference type="ChEBI" id="CHEBI:18420"/>
        <label>2</label>
    </ligand>
</feature>
<feature type="binding site" evidence="1">
    <location>
        <position position="279"/>
    </location>
    <ligand>
        <name>Mg(2+)</name>
        <dbReference type="ChEBI" id="CHEBI:18420"/>
        <label>2</label>
    </ligand>
</feature>
<feature type="binding site" evidence="1">
    <location>
        <position position="304"/>
    </location>
    <ligand>
        <name>Mg(2+)</name>
        <dbReference type="ChEBI" id="CHEBI:18420"/>
        <label>1</label>
    </ligand>
</feature>
<feature type="binding site" evidence="1">
    <location>
        <position position="315"/>
    </location>
    <ligand>
        <name>Mg(2+)</name>
        <dbReference type="ChEBI" id="CHEBI:18420"/>
        <label>2</label>
    </ligand>
</feature>
<feature type="binding site" evidence="1">
    <location>
        <position position="317"/>
    </location>
    <ligand>
        <name>Mg(2+)</name>
        <dbReference type="ChEBI" id="CHEBI:18420"/>
        <label>2</label>
    </ligand>
</feature>
<feature type="binding site" evidence="1">
    <location>
        <position position="347"/>
    </location>
    <ligand>
        <name>Mg(2+)</name>
        <dbReference type="ChEBI" id="CHEBI:18420"/>
        <label>1</label>
    </ligand>
</feature>
<keyword id="KW-0119">Carbohydrate metabolism</keyword>
<keyword id="KW-0963">Cytoplasm</keyword>
<keyword id="KW-0413">Isomerase</keyword>
<keyword id="KW-0460">Magnesium</keyword>
<keyword id="KW-0479">Metal-binding</keyword>
<keyword id="KW-1185">Reference proteome</keyword>
<keyword id="KW-0859">Xylose metabolism</keyword>
<sequence length="446" mass="48792">MSNTVFIGAKEYFPGIGKIGFEGRDSDNPLAFKVYDANKQVAGKTMAEHLRFAVAYWHSFCGNGADPFGPGTRAYPWDVGNTALARAEAKSDAAFEFFTKLGVPYYCFHDIDLAPDADDIGEYENNLKHMVGIAKQRQADTGVKLLWGTANLFSHPRYMNGASTNPDFNVVARAAVQVKAAIDATVELGGENYVFWGGREGYACLHNTQMKREQDNMARFLTLARDYGRAIGFKGNFLIEPKPMEPMKHQYDFDSATVIGFLRQHGLDQDFKLNIEANHATLSGHSFEHDLQVASDAGLLGSIDANRGNPQNGWDTDQFPTDLYDTVGAMLVVLRQGGLAPGGLNFDAKVRRESSDPQDLFLAHIGGMDAFARGLEVADALLTSSPLETWRAQRYASFDSGAGADFANGTSTLADLATYAAGKGEPTQLSGRQEAYENLINQYLTR</sequence>
<dbReference type="EC" id="5.3.1.5"/>
<dbReference type="EMBL" id="AE008922">
    <property type="protein sequence ID" value="AAM43321.1"/>
    <property type="molecule type" value="Genomic_DNA"/>
</dbReference>
<dbReference type="RefSeq" id="NP_639439.1">
    <property type="nucleotide sequence ID" value="NC_003902.1"/>
</dbReference>
<dbReference type="SMR" id="Q8P3H1"/>
<dbReference type="STRING" id="190485.XCC4100"/>
<dbReference type="EnsemblBacteria" id="AAM43321">
    <property type="protein sequence ID" value="AAM43321"/>
    <property type="gene ID" value="XCC4100"/>
</dbReference>
<dbReference type="KEGG" id="xcc:XCC4100"/>
<dbReference type="PATRIC" id="fig|190485.4.peg.4394"/>
<dbReference type="eggNOG" id="COG2115">
    <property type="taxonomic scope" value="Bacteria"/>
</dbReference>
<dbReference type="HOGENOM" id="CLU_037261_1_0_6"/>
<dbReference type="OrthoDB" id="9763981at2"/>
<dbReference type="Proteomes" id="UP000001010">
    <property type="component" value="Chromosome"/>
</dbReference>
<dbReference type="GO" id="GO:0005737">
    <property type="term" value="C:cytoplasm"/>
    <property type="evidence" value="ECO:0007669"/>
    <property type="project" value="UniProtKB-SubCell"/>
</dbReference>
<dbReference type="GO" id="GO:0000287">
    <property type="term" value="F:magnesium ion binding"/>
    <property type="evidence" value="ECO:0007669"/>
    <property type="project" value="UniProtKB-UniRule"/>
</dbReference>
<dbReference type="GO" id="GO:0009045">
    <property type="term" value="F:xylose isomerase activity"/>
    <property type="evidence" value="ECO:0000318"/>
    <property type="project" value="GO_Central"/>
</dbReference>
<dbReference type="GO" id="GO:0042843">
    <property type="term" value="P:D-xylose catabolic process"/>
    <property type="evidence" value="ECO:0000318"/>
    <property type="project" value="GO_Central"/>
</dbReference>
<dbReference type="FunFam" id="3.20.20.150:FF:000002">
    <property type="entry name" value="Xylose isomerase"/>
    <property type="match status" value="1"/>
</dbReference>
<dbReference type="Gene3D" id="3.20.20.150">
    <property type="entry name" value="Divalent-metal-dependent TIM barrel enzymes"/>
    <property type="match status" value="1"/>
</dbReference>
<dbReference type="HAMAP" id="MF_00455">
    <property type="entry name" value="Xylose_isom_A"/>
    <property type="match status" value="1"/>
</dbReference>
<dbReference type="InterPro" id="IPR036237">
    <property type="entry name" value="Xyl_isomerase-like_sf"/>
</dbReference>
<dbReference type="InterPro" id="IPR013452">
    <property type="entry name" value="Xylose_isom_bac"/>
</dbReference>
<dbReference type="InterPro" id="IPR001998">
    <property type="entry name" value="Xylose_isomerase"/>
</dbReference>
<dbReference type="NCBIfam" id="NF003998">
    <property type="entry name" value="PRK05474.1"/>
    <property type="match status" value="1"/>
</dbReference>
<dbReference type="NCBIfam" id="NF009115">
    <property type="entry name" value="PRK12465.1"/>
    <property type="match status" value="1"/>
</dbReference>
<dbReference type="NCBIfam" id="TIGR02630">
    <property type="entry name" value="xylose_isom_A"/>
    <property type="match status" value="1"/>
</dbReference>
<dbReference type="PANTHER" id="PTHR48408">
    <property type="match status" value="1"/>
</dbReference>
<dbReference type="PANTHER" id="PTHR48408:SF1">
    <property type="entry name" value="XYLOSE ISOMERASE"/>
    <property type="match status" value="1"/>
</dbReference>
<dbReference type="PRINTS" id="PR00688">
    <property type="entry name" value="XYLOSISMRASE"/>
</dbReference>
<dbReference type="SUPFAM" id="SSF51658">
    <property type="entry name" value="Xylose isomerase-like"/>
    <property type="match status" value="1"/>
</dbReference>
<dbReference type="PROSITE" id="PS51415">
    <property type="entry name" value="XYLOSE_ISOMERASE"/>
    <property type="match status" value="1"/>
</dbReference>
<evidence type="ECO:0000250" key="1"/>
<evidence type="ECO:0000305" key="2"/>
<reference key="1">
    <citation type="journal article" date="2002" name="Nature">
        <title>Comparison of the genomes of two Xanthomonas pathogens with differing host specificities.</title>
        <authorList>
            <person name="da Silva A.C.R."/>
            <person name="Ferro J.A."/>
            <person name="Reinach F.C."/>
            <person name="Farah C.S."/>
            <person name="Furlan L.R."/>
            <person name="Quaggio R.B."/>
            <person name="Monteiro-Vitorello C.B."/>
            <person name="Van Sluys M.A."/>
            <person name="Almeida N.F. Jr."/>
            <person name="Alves L.M.C."/>
            <person name="do Amaral A.M."/>
            <person name="Bertolini M.C."/>
            <person name="Camargo L.E.A."/>
            <person name="Camarotte G."/>
            <person name="Cannavan F."/>
            <person name="Cardozo J."/>
            <person name="Chambergo F."/>
            <person name="Ciapina L.P."/>
            <person name="Cicarelli R.M.B."/>
            <person name="Coutinho L.L."/>
            <person name="Cursino-Santos J.R."/>
            <person name="El-Dorry H."/>
            <person name="Faria J.B."/>
            <person name="Ferreira A.J.S."/>
            <person name="Ferreira R.C.C."/>
            <person name="Ferro M.I.T."/>
            <person name="Formighieri E.F."/>
            <person name="Franco M.C."/>
            <person name="Greggio C.C."/>
            <person name="Gruber A."/>
            <person name="Katsuyama A.M."/>
            <person name="Kishi L.T."/>
            <person name="Leite R.P."/>
            <person name="Lemos E.G.M."/>
            <person name="Lemos M.V.F."/>
            <person name="Locali E.C."/>
            <person name="Machado M.A."/>
            <person name="Madeira A.M.B.N."/>
            <person name="Martinez-Rossi N.M."/>
            <person name="Martins E.C."/>
            <person name="Meidanis J."/>
            <person name="Menck C.F.M."/>
            <person name="Miyaki C.Y."/>
            <person name="Moon D.H."/>
            <person name="Moreira L.M."/>
            <person name="Novo M.T.M."/>
            <person name="Okura V.K."/>
            <person name="Oliveira M.C."/>
            <person name="Oliveira V.R."/>
            <person name="Pereira H.A."/>
            <person name="Rossi A."/>
            <person name="Sena J.A.D."/>
            <person name="Silva C."/>
            <person name="de Souza R.F."/>
            <person name="Spinola L.A.F."/>
            <person name="Takita M.A."/>
            <person name="Tamura R.E."/>
            <person name="Teixeira E.C."/>
            <person name="Tezza R.I.D."/>
            <person name="Trindade dos Santos M."/>
            <person name="Truffi D."/>
            <person name="Tsai S.M."/>
            <person name="White F.F."/>
            <person name="Setubal J.C."/>
            <person name="Kitajima J.P."/>
        </authorList>
    </citation>
    <scope>NUCLEOTIDE SEQUENCE [LARGE SCALE GENOMIC DNA]</scope>
    <source>
        <strain>ATCC 33913 / DSM 3586 / NCPPB 528 / LMG 568 / P 25</strain>
    </source>
</reference>
<protein>
    <recommendedName>
        <fullName>Xylose isomerase 2</fullName>
        <ecNumber>5.3.1.5</ecNumber>
    </recommendedName>
</protein>
<proteinExistence type="inferred from homology"/>
<accession>Q8P3H1</accession>
<name>XYLA2_XANCP</name>
<comment type="catalytic activity">
    <reaction>
        <text>alpha-D-xylose = alpha-D-xylulofuranose</text>
        <dbReference type="Rhea" id="RHEA:22816"/>
        <dbReference type="ChEBI" id="CHEBI:28518"/>
        <dbReference type="ChEBI" id="CHEBI:188998"/>
        <dbReference type="EC" id="5.3.1.5"/>
    </reaction>
</comment>
<comment type="cofactor">
    <cofactor evidence="1">
        <name>Mg(2+)</name>
        <dbReference type="ChEBI" id="CHEBI:18420"/>
    </cofactor>
    <text evidence="1">Binds 2 magnesium ions per subunit.</text>
</comment>
<comment type="subunit">
    <text evidence="1">Homotetramer.</text>
</comment>
<comment type="subcellular location">
    <subcellularLocation>
        <location evidence="1">Cytoplasm</location>
    </subcellularLocation>
</comment>
<comment type="similarity">
    <text evidence="2">Belongs to the xylose isomerase family.</text>
</comment>
<organism>
    <name type="scientific">Xanthomonas campestris pv. campestris (strain ATCC 33913 / DSM 3586 / NCPPB 528 / LMG 568 / P 25)</name>
    <dbReference type="NCBI Taxonomy" id="190485"/>
    <lineage>
        <taxon>Bacteria</taxon>
        <taxon>Pseudomonadati</taxon>
        <taxon>Pseudomonadota</taxon>
        <taxon>Gammaproteobacteria</taxon>
        <taxon>Lysobacterales</taxon>
        <taxon>Lysobacteraceae</taxon>
        <taxon>Xanthomonas</taxon>
    </lineage>
</organism>
<gene>
    <name type="primary">xylA2</name>
    <name type="ordered locus">XCC4100</name>
</gene>